<organism>
    <name type="scientific">Shigella flexneri</name>
    <dbReference type="NCBI Taxonomy" id="623"/>
    <lineage>
        <taxon>Bacteria</taxon>
        <taxon>Pseudomonadati</taxon>
        <taxon>Pseudomonadota</taxon>
        <taxon>Gammaproteobacteria</taxon>
        <taxon>Enterobacterales</taxon>
        <taxon>Enterobacteriaceae</taxon>
        <taxon>Shigella</taxon>
    </lineage>
</organism>
<feature type="chain" id="PRO_0000087812" description="Uncharacterized MFS-type transporter YhhS">
    <location>
        <begin position="1"/>
        <end position="405"/>
    </location>
</feature>
<feature type="transmembrane region" description="Helical" evidence="1">
    <location>
        <begin position="19"/>
        <end position="39"/>
    </location>
</feature>
<feature type="transmembrane region" description="Helical" evidence="1">
    <location>
        <begin position="47"/>
        <end position="67"/>
    </location>
</feature>
<feature type="transmembrane region" description="Helical" evidence="1">
    <location>
        <begin position="85"/>
        <end position="105"/>
    </location>
</feature>
<feature type="transmembrane region" description="Helical" evidence="1">
    <location>
        <begin position="107"/>
        <end position="127"/>
    </location>
</feature>
<feature type="transmembrane region" description="Helical" evidence="1">
    <location>
        <begin position="156"/>
        <end position="176"/>
    </location>
</feature>
<feature type="transmembrane region" description="Helical" evidence="1">
    <location>
        <begin position="178"/>
        <end position="198"/>
    </location>
</feature>
<feature type="transmembrane region" description="Helical" evidence="1">
    <location>
        <begin position="224"/>
        <end position="244"/>
    </location>
</feature>
<feature type="transmembrane region" description="Helical" evidence="1">
    <location>
        <begin position="252"/>
        <end position="272"/>
    </location>
</feature>
<feature type="transmembrane region" description="Helical" evidence="1">
    <location>
        <begin position="283"/>
        <end position="303"/>
    </location>
</feature>
<feature type="transmembrane region" description="Helical" evidence="1">
    <location>
        <begin position="309"/>
        <end position="329"/>
    </location>
</feature>
<feature type="transmembrane region" description="Helical" evidence="1">
    <location>
        <begin position="344"/>
        <end position="364"/>
    </location>
</feature>
<feature type="transmembrane region" description="Helical" evidence="1">
    <location>
        <begin position="366"/>
        <end position="386"/>
    </location>
</feature>
<reference key="1">
    <citation type="journal article" date="2002" name="Nucleic Acids Res.">
        <title>Genome sequence of Shigella flexneri 2a: insights into pathogenicity through comparison with genomes of Escherichia coli K12 and O157.</title>
        <authorList>
            <person name="Jin Q."/>
            <person name="Yuan Z."/>
            <person name="Xu J."/>
            <person name="Wang Y."/>
            <person name="Shen Y."/>
            <person name="Lu W."/>
            <person name="Wang J."/>
            <person name="Liu H."/>
            <person name="Yang J."/>
            <person name="Yang F."/>
            <person name="Zhang X."/>
            <person name="Zhang J."/>
            <person name="Yang G."/>
            <person name="Wu H."/>
            <person name="Qu D."/>
            <person name="Dong J."/>
            <person name="Sun L."/>
            <person name="Xue Y."/>
            <person name="Zhao A."/>
            <person name="Gao Y."/>
            <person name="Zhu J."/>
            <person name="Kan B."/>
            <person name="Ding K."/>
            <person name="Chen S."/>
            <person name="Cheng H."/>
            <person name="Yao Z."/>
            <person name="He B."/>
            <person name="Chen R."/>
            <person name="Ma D."/>
            <person name="Qiang B."/>
            <person name="Wen Y."/>
            <person name="Hou Y."/>
            <person name="Yu J."/>
        </authorList>
    </citation>
    <scope>NUCLEOTIDE SEQUENCE [LARGE SCALE GENOMIC DNA]</scope>
    <source>
        <strain>301 / Serotype 2a</strain>
    </source>
</reference>
<reference key="2">
    <citation type="journal article" date="2003" name="Infect. Immun.">
        <title>Complete genome sequence and comparative genomics of Shigella flexneri serotype 2a strain 2457T.</title>
        <authorList>
            <person name="Wei J."/>
            <person name="Goldberg M.B."/>
            <person name="Burland V."/>
            <person name="Venkatesan M.M."/>
            <person name="Deng W."/>
            <person name="Fournier G."/>
            <person name="Mayhew G.F."/>
            <person name="Plunkett G. III"/>
            <person name="Rose D.J."/>
            <person name="Darling A."/>
            <person name="Mau B."/>
            <person name="Perna N.T."/>
            <person name="Payne S.M."/>
            <person name="Runyen-Janecky L.J."/>
            <person name="Zhou S."/>
            <person name="Schwartz D.C."/>
            <person name="Blattner F.R."/>
        </authorList>
    </citation>
    <scope>NUCLEOTIDE SEQUENCE [LARGE SCALE GENOMIC DNA]</scope>
    <source>
        <strain>ATCC 700930 / 2457T / Serotype 2a</strain>
    </source>
</reference>
<protein>
    <recommendedName>
        <fullName evidence="1">Uncharacterized MFS-type transporter YhhS</fullName>
    </recommendedName>
</protein>
<keyword id="KW-0997">Cell inner membrane</keyword>
<keyword id="KW-1003">Cell membrane</keyword>
<keyword id="KW-0472">Membrane</keyword>
<keyword id="KW-1185">Reference proteome</keyword>
<keyword id="KW-0812">Transmembrane</keyword>
<keyword id="KW-1133">Transmembrane helix</keyword>
<keyword id="KW-0813">Transport</keyword>
<dbReference type="EMBL" id="AE005674">
    <property type="protein sequence ID" value="AAN44950.1"/>
    <property type="status" value="ALT_INIT"/>
    <property type="molecule type" value="Genomic_DNA"/>
</dbReference>
<dbReference type="EMBL" id="AE014073">
    <property type="protein sequence ID" value="AAP19232.1"/>
    <property type="status" value="ALT_INIT"/>
    <property type="molecule type" value="Genomic_DNA"/>
</dbReference>
<dbReference type="RefSeq" id="NP_709243.3">
    <property type="nucleotide sequence ID" value="NC_004337.2"/>
</dbReference>
<dbReference type="RefSeq" id="WP_001309018.1">
    <property type="nucleotide sequence ID" value="NZ_WPGW01000010.1"/>
</dbReference>
<dbReference type="SMR" id="P59195"/>
<dbReference type="STRING" id="198214.SF3491"/>
<dbReference type="PaxDb" id="198214-SF3491"/>
<dbReference type="GeneID" id="1026413"/>
<dbReference type="KEGG" id="sfl:SF3491"/>
<dbReference type="KEGG" id="sfx:S4272"/>
<dbReference type="PATRIC" id="fig|198214.7.peg.4112"/>
<dbReference type="HOGENOM" id="CLU_001265_10_3_6"/>
<dbReference type="Proteomes" id="UP000001006">
    <property type="component" value="Chromosome"/>
</dbReference>
<dbReference type="Proteomes" id="UP000002673">
    <property type="component" value="Chromosome"/>
</dbReference>
<dbReference type="GO" id="GO:0005886">
    <property type="term" value="C:plasma membrane"/>
    <property type="evidence" value="ECO:0007669"/>
    <property type="project" value="UniProtKB-SubCell"/>
</dbReference>
<dbReference type="GO" id="GO:0022857">
    <property type="term" value="F:transmembrane transporter activity"/>
    <property type="evidence" value="ECO:0007669"/>
    <property type="project" value="UniProtKB-UniRule"/>
</dbReference>
<dbReference type="CDD" id="cd17489">
    <property type="entry name" value="MFS_YfcJ_like"/>
    <property type="match status" value="1"/>
</dbReference>
<dbReference type="FunFam" id="1.20.1250.20:FF:000155">
    <property type="entry name" value="Uncharacterized MFS-type transporter YhhS"/>
    <property type="match status" value="1"/>
</dbReference>
<dbReference type="Gene3D" id="1.20.1250.20">
    <property type="entry name" value="MFS general substrate transporter like domains"/>
    <property type="match status" value="1"/>
</dbReference>
<dbReference type="HAMAP" id="MF_01118">
    <property type="entry name" value="MFS_YhhS"/>
    <property type="match status" value="1"/>
</dbReference>
<dbReference type="InterPro" id="IPR011701">
    <property type="entry name" value="MFS"/>
</dbReference>
<dbReference type="InterPro" id="IPR020846">
    <property type="entry name" value="MFS_dom"/>
</dbReference>
<dbReference type="InterPro" id="IPR036259">
    <property type="entry name" value="MFS_trans_sf"/>
</dbReference>
<dbReference type="InterPro" id="IPR050171">
    <property type="entry name" value="MFS_Transporters"/>
</dbReference>
<dbReference type="InterPro" id="IPR023008">
    <property type="entry name" value="MFS_YhhS-like"/>
</dbReference>
<dbReference type="NCBIfam" id="NF003477">
    <property type="entry name" value="PRK05122.1"/>
    <property type="match status" value="1"/>
</dbReference>
<dbReference type="PANTHER" id="PTHR23517:SF13">
    <property type="entry name" value="MAJOR FACILITATOR SUPERFAMILY MFS_1"/>
    <property type="match status" value="1"/>
</dbReference>
<dbReference type="PANTHER" id="PTHR23517">
    <property type="entry name" value="RESISTANCE PROTEIN MDTM, PUTATIVE-RELATED-RELATED"/>
    <property type="match status" value="1"/>
</dbReference>
<dbReference type="Pfam" id="PF07690">
    <property type="entry name" value="MFS_1"/>
    <property type="match status" value="1"/>
</dbReference>
<dbReference type="SUPFAM" id="SSF103473">
    <property type="entry name" value="MFS general substrate transporter"/>
    <property type="match status" value="1"/>
</dbReference>
<dbReference type="PROSITE" id="PS50850">
    <property type="entry name" value="MFS"/>
    <property type="match status" value="1"/>
</dbReference>
<name>YHHS_SHIFL</name>
<gene>
    <name type="primary">yhhS</name>
    <name type="ordered locus">SF3491</name>
    <name type="ordered locus">S4272</name>
</gene>
<proteinExistence type="inferred from homology"/>
<accession>P59195</accession>
<sequence length="405" mass="42182">MPEPVAEPALNGLRLNLRIVSIVMFNFASYLTIGLPLAVLPGYVHDVMGFSAFWAGLVISLQYFATLLSRPHAGRYADLLGPKKIVVFGLCGCFLSGLGYLTAGLTASLPVISLLLLCLGRVILGIGQSFAGTGSTLWGVGVVGSLHIGRVISWNGIVTYGAMAMGAPLGVVFYHWGGLQALALIIMGVALVAILLAIPRPTVKASKGKPLPFRAVLGRVWLYGMALALASAGFGVIATFITLFYDAKGWDGAAFALTLFSCAFVGTRLLFPNGINRIGGLNVAMICFSVEIIGLLLVGVATMPWMAKIGVLLAGAGFSLVFPALGVVAVKAVPQQNQGAALATYTVFMDLSLGVTGPLAGLVMSWAGVPVIYLAAAGLVAIALLLTWRLKKRPPEHVPEAASSS</sequence>
<comment type="subcellular location">
    <subcellularLocation>
        <location evidence="1">Cell inner membrane</location>
        <topology evidence="1">Multi-pass membrane protein</topology>
    </subcellularLocation>
</comment>
<comment type="similarity">
    <text evidence="1">Belongs to the major facilitator superfamily. YhhS family.</text>
</comment>
<comment type="sequence caution" evidence="2">
    <conflict type="erroneous initiation">
        <sequence resource="EMBL-CDS" id="AAN44950"/>
    </conflict>
</comment>
<comment type="sequence caution" evidence="2">
    <conflict type="erroneous initiation">
        <sequence resource="EMBL-CDS" id="AAP19232"/>
    </conflict>
</comment>
<evidence type="ECO:0000255" key="1">
    <source>
        <dbReference type="HAMAP-Rule" id="MF_01118"/>
    </source>
</evidence>
<evidence type="ECO:0000305" key="2"/>